<protein>
    <recommendedName>
        <fullName evidence="1">D-tagatose-1,6-bisphosphate aldolase subunit GatZ</fullName>
    </recommendedName>
</protein>
<dbReference type="EMBL" id="CP001063">
    <property type="protein sequence ID" value="ACD08220.1"/>
    <property type="molecule type" value="Genomic_DNA"/>
</dbReference>
<dbReference type="RefSeq" id="WP_000853861.1">
    <property type="nucleotide sequence ID" value="NC_010658.1"/>
</dbReference>
<dbReference type="SMR" id="B2TY93"/>
<dbReference type="STRING" id="344609.SbBS512_E1143"/>
<dbReference type="KEGG" id="sbc:SbBS512_E1143"/>
<dbReference type="HOGENOM" id="CLU_053334_0_0_6"/>
<dbReference type="UniPathway" id="UPA00704">
    <property type="reaction ID" value="UER00716"/>
</dbReference>
<dbReference type="Proteomes" id="UP000001030">
    <property type="component" value="Chromosome"/>
</dbReference>
<dbReference type="GO" id="GO:0005886">
    <property type="term" value="C:plasma membrane"/>
    <property type="evidence" value="ECO:0007669"/>
    <property type="project" value="TreeGrafter"/>
</dbReference>
<dbReference type="GO" id="GO:2001059">
    <property type="term" value="P:D-tagatose 6-phosphate catabolic process"/>
    <property type="evidence" value="ECO:0007669"/>
    <property type="project" value="UniProtKB-UniRule"/>
</dbReference>
<dbReference type="GO" id="GO:0019402">
    <property type="term" value="P:galactitol metabolic process"/>
    <property type="evidence" value="ECO:0007669"/>
    <property type="project" value="UniProtKB-KW"/>
</dbReference>
<dbReference type="GO" id="GO:0009401">
    <property type="term" value="P:phosphoenolpyruvate-dependent sugar phosphotransferase system"/>
    <property type="evidence" value="ECO:0007669"/>
    <property type="project" value="TreeGrafter"/>
</dbReference>
<dbReference type="FunFam" id="3.20.20.70:FF:000141">
    <property type="entry name" value="D-tagatose-1,6-bisphosphate aldolase subunit GatZ"/>
    <property type="match status" value="1"/>
</dbReference>
<dbReference type="Gene3D" id="3.20.20.70">
    <property type="entry name" value="Aldolase class I"/>
    <property type="match status" value="1"/>
</dbReference>
<dbReference type="Gene3D" id="1.10.400.20">
    <property type="entry name" value="putative tagatose 6-phosphate kinase domain like"/>
    <property type="match status" value="1"/>
</dbReference>
<dbReference type="HAMAP" id="MF_01296">
    <property type="entry name" value="Tagatose_aldol_GatZ"/>
    <property type="match status" value="1"/>
</dbReference>
<dbReference type="InterPro" id="IPR013785">
    <property type="entry name" value="Aldolase_TIM"/>
</dbReference>
<dbReference type="InterPro" id="IPR012062">
    <property type="entry name" value="GatZ/KbaZ-like"/>
</dbReference>
<dbReference type="InterPro" id="IPR050303">
    <property type="entry name" value="GatZ_KbaZ_carbometab"/>
</dbReference>
<dbReference type="InterPro" id="IPR023436">
    <property type="entry name" value="TagBP_ald_GatZ"/>
</dbReference>
<dbReference type="NCBIfam" id="TIGR02810">
    <property type="entry name" value="agaZ_gatZ"/>
    <property type="match status" value="1"/>
</dbReference>
<dbReference type="NCBIfam" id="NF011626">
    <property type="entry name" value="PRK15052.1"/>
    <property type="match status" value="1"/>
</dbReference>
<dbReference type="PANTHER" id="PTHR32502:SF12">
    <property type="entry name" value="D-TAGATOSE-1,6-BISPHOSPHATE ALDOLASE SUBUNIT GATZ"/>
    <property type="match status" value="1"/>
</dbReference>
<dbReference type="PANTHER" id="PTHR32502">
    <property type="entry name" value="N-ACETYLGALACTOSAMINE PERMEASE II COMPONENT-RELATED"/>
    <property type="match status" value="1"/>
</dbReference>
<dbReference type="Pfam" id="PF08013">
    <property type="entry name" value="GatZ_KbaZ-like"/>
    <property type="match status" value="1"/>
</dbReference>
<dbReference type="PIRSF" id="PIRSF009264">
    <property type="entry name" value="TagBP_ald_AgaZ"/>
    <property type="match status" value="1"/>
</dbReference>
<dbReference type="SUPFAM" id="SSF51569">
    <property type="entry name" value="Aldolase"/>
    <property type="match status" value="1"/>
</dbReference>
<comment type="function">
    <text evidence="1">Component of the tagatose-1,6-bisphosphate aldolase GatYZ that is required for full activity and stability of the Y subunit. Could have a chaperone-like function for the proper and stable folding of GatY. When expressed alone, GatZ does not show any aldolase activity. Is involved in the catabolism of galactitol.</text>
</comment>
<comment type="pathway">
    <text evidence="1">Carbohydrate metabolism; D-tagatose 6-phosphate degradation; D-glyceraldehyde 3-phosphate and glycerone phosphate from D-tagatose 6-phosphate: step 2/2.</text>
</comment>
<comment type="subunit">
    <text evidence="1">Forms a complex with GatY.</text>
</comment>
<comment type="similarity">
    <text evidence="1">Belongs to the GatZ/KbaZ family. GatZ subfamily.</text>
</comment>
<organism>
    <name type="scientific">Shigella boydii serotype 18 (strain CDC 3083-94 / BS512)</name>
    <dbReference type="NCBI Taxonomy" id="344609"/>
    <lineage>
        <taxon>Bacteria</taxon>
        <taxon>Pseudomonadati</taxon>
        <taxon>Pseudomonadota</taxon>
        <taxon>Gammaproteobacteria</taxon>
        <taxon>Enterobacterales</taxon>
        <taxon>Enterobacteriaceae</taxon>
        <taxon>Shigella</taxon>
    </lineage>
</organism>
<reference key="1">
    <citation type="submission" date="2008-05" db="EMBL/GenBank/DDBJ databases">
        <title>Complete sequence of Shigella boydii serotype 18 strain BS512.</title>
        <authorList>
            <person name="Rasko D.A."/>
            <person name="Rosovitz M."/>
            <person name="Maurelli A.T."/>
            <person name="Myers G."/>
            <person name="Seshadri R."/>
            <person name="Cer R."/>
            <person name="Jiang L."/>
            <person name="Ravel J."/>
            <person name="Sebastian Y."/>
        </authorList>
    </citation>
    <scope>NUCLEOTIDE SEQUENCE [LARGE SCALE GENOMIC DNA]</scope>
    <source>
        <strain>CDC 3083-94 / BS512</strain>
    </source>
</reference>
<name>GATZ_SHIB3</name>
<proteinExistence type="inferred from homology"/>
<sequence length="420" mass="47025">MKTLIARHKAGEHIGICSVCSAHPLVIEAALAFDRNSTRKVLIEATSNQVNQFGGYTGMTPADFREFVFTIADKVGFARERIILGGDHLGPNCWQQENADAAMEKSVELVKAYVRAGFSKIHLDASMSCAGDPIPLAPETVAERAAVLCFAAESVATDCQREQLSYVIGTEVPVPGGEASAIQSVHITHVEDAANTLRTHQKAFIARGLTEALTRVIAIVVQPGVEFDHSNIIHYQPQEAQALAQWIENTRMVYEAHSTDYQTRTAYWELVRDHFAILKVGPALTFALREAIFALAQIEQELIAPENRSGCLAVIEEVMLDEPQYWKKYYRTGFNDSLLDIRYSLSDRIRYYWPHSRIKNSVETMMVNLEGVDIPLGMISQYLPKQFERIQSGELSAIPHQLIMDKIYDVLRAYRYGCAE</sequence>
<keyword id="KW-0298">Galactitol metabolism</keyword>
<keyword id="KW-1185">Reference proteome</keyword>
<evidence type="ECO:0000255" key="1">
    <source>
        <dbReference type="HAMAP-Rule" id="MF_01296"/>
    </source>
</evidence>
<feature type="chain" id="PRO_0000372519" description="D-tagatose-1,6-bisphosphate aldolase subunit GatZ">
    <location>
        <begin position="1"/>
        <end position="420"/>
    </location>
</feature>
<gene>
    <name evidence="1" type="primary">gatZ</name>
    <name type="ordered locus">SbBS512_E1143</name>
</gene>
<accession>B2TY93</accession>